<name>NPRL3_CAEEL</name>
<comment type="function">
    <text evidence="1">As a component of the GATOR complex may function in the amino acid-sensing branch of the TORC1 signaling pathway.</text>
</comment>
<comment type="subunit">
    <text evidence="1">Probably part of the GATOR complex.</text>
</comment>
<comment type="subcellular location">
    <subcellularLocation>
        <location evidence="1">Lysosome membrane</location>
    </subcellularLocation>
</comment>
<comment type="similarity">
    <text evidence="3">Belongs to the NPR3 family.</text>
</comment>
<keyword id="KW-0458">Lysosome</keyword>
<keyword id="KW-0472">Membrane</keyword>
<keyword id="KW-1185">Reference proteome</keyword>
<dbReference type="EMBL" id="FO081169">
    <property type="protein sequence ID" value="CCD69640.1"/>
    <property type="molecule type" value="Genomic_DNA"/>
</dbReference>
<dbReference type="PIR" id="T16279">
    <property type="entry name" value="T16279"/>
</dbReference>
<dbReference type="RefSeq" id="NP_501396.1">
    <property type="nucleotide sequence ID" value="NM_068995.7"/>
</dbReference>
<dbReference type="SMR" id="Q20069"/>
<dbReference type="BioGRID" id="50106">
    <property type="interactions" value="1"/>
</dbReference>
<dbReference type="FunCoup" id="Q20069">
    <property type="interactions" value="2191"/>
</dbReference>
<dbReference type="STRING" id="6239.F35H10.7a.2"/>
<dbReference type="PaxDb" id="6239-F35H10.7.2"/>
<dbReference type="PeptideAtlas" id="Q20069"/>
<dbReference type="EnsemblMetazoa" id="F35H10.7a.1">
    <property type="protein sequence ID" value="F35H10.7a.1"/>
    <property type="gene ID" value="WBGene00018072"/>
</dbReference>
<dbReference type="GeneID" id="185331"/>
<dbReference type="KEGG" id="cel:CELE_F35H10.7"/>
<dbReference type="UCSC" id="F35H10.7.1">
    <property type="organism name" value="c. elegans"/>
</dbReference>
<dbReference type="AGR" id="WB:WBGene00018072"/>
<dbReference type="CTD" id="185331"/>
<dbReference type="WormBase" id="F35H10.7a">
    <property type="protein sequence ID" value="CE04507"/>
    <property type="gene ID" value="WBGene00018072"/>
    <property type="gene designation" value="nprl-3"/>
</dbReference>
<dbReference type="eggNOG" id="KOG3830">
    <property type="taxonomic scope" value="Eukaryota"/>
</dbReference>
<dbReference type="InParanoid" id="Q20069"/>
<dbReference type="OMA" id="MGENHEQ"/>
<dbReference type="OrthoDB" id="18648at2759"/>
<dbReference type="PhylomeDB" id="Q20069"/>
<dbReference type="PRO" id="PR:Q20069"/>
<dbReference type="Proteomes" id="UP000001940">
    <property type="component" value="Chromosome IV"/>
</dbReference>
<dbReference type="Bgee" id="WBGene00018072">
    <property type="expression patterns" value="Expressed in germ line (C elegans) and 4 other cell types or tissues"/>
</dbReference>
<dbReference type="ExpressionAtlas" id="Q20069">
    <property type="expression patterns" value="baseline and differential"/>
</dbReference>
<dbReference type="GO" id="GO:1990130">
    <property type="term" value="C:GATOR1 complex"/>
    <property type="evidence" value="ECO:0000318"/>
    <property type="project" value="GO_Central"/>
</dbReference>
<dbReference type="GO" id="GO:0005765">
    <property type="term" value="C:lysosomal membrane"/>
    <property type="evidence" value="ECO:0007669"/>
    <property type="project" value="UniProtKB-SubCell"/>
</dbReference>
<dbReference type="GO" id="GO:0034198">
    <property type="term" value="P:cellular response to amino acid starvation"/>
    <property type="evidence" value="ECO:0000318"/>
    <property type="project" value="GO_Central"/>
</dbReference>
<dbReference type="GO" id="GO:1904262">
    <property type="term" value="P:negative regulation of TORC1 signaling"/>
    <property type="evidence" value="ECO:0000318"/>
    <property type="project" value="GO_Central"/>
</dbReference>
<dbReference type="GO" id="GO:0010508">
    <property type="term" value="P:positive regulation of autophagy"/>
    <property type="evidence" value="ECO:0000318"/>
    <property type="project" value="GO_Central"/>
</dbReference>
<dbReference type="InterPro" id="IPR056603">
    <property type="entry name" value="HTH_NPRL3"/>
</dbReference>
<dbReference type="InterPro" id="IPR005365">
    <property type="entry name" value="Npr3"/>
</dbReference>
<dbReference type="PANTHER" id="PTHR13153">
    <property type="entry name" value="CGTHBA PROTEIN -14 GENE PROTEIN"/>
    <property type="match status" value="1"/>
</dbReference>
<dbReference type="PANTHER" id="PTHR13153:SF5">
    <property type="entry name" value="GATOR COMPLEX PROTEIN NPRL3"/>
    <property type="match status" value="1"/>
</dbReference>
<dbReference type="Pfam" id="PF24064">
    <property type="entry name" value="HTH_NPRL3"/>
    <property type="match status" value="1"/>
</dbReference>
<dbReference type="Pfam" id="PF03666">
    <property type="entry name" value="NPR3"/>
    <property type="match status" value="1"/>
</dbReference>
<feature type="chain" id="PRO_0000220640" description="GATOR complex protein NPRL3">
    <location>
        <begin position="1"/>
        <end position="511"/>
    </location>
</feature>
<feature type="region of interest" description="Disordered" evidence="2">
    <location>
        <begin position="37"/>
        <end position="58"/>
    </location>
</feature>
<evidence type="ECO:0000250" key="1">
    <source>
        <dbReference type="UniProtKB" id="Q12980"/>
    </source>
</evidence>
<evidence type="ECO:0000256" key="2">
    <source>
        <dbReference type="SAM" id="MobiDB-lite"/>
    </source>
</evidence>
<evidence type="ECO:0000305" key="3"/>
<protein>
    <recommendedName>
        <fullName evidence="3">GATOR complex protein NPRL3</fullName>
    </recommendedName>
    <alternativeName>
        <fullName>Nitrogen permease regulator 3-like protein</fullName>
    </alternativeName>
</protein>
<reference key="1">
    <citation type="journal article" date="1998" name="Science">
        <title>Genome sequence of the nematode C. elegans: a platform for investigating biology.</title>
        <authorList>
            <consortium name="The C. elegans sequencing consortium"/>
        </authorList>
    </citation>
    <scope>NUCLEOTIDE SEQUENCE [LARGE SCALE GENOMIC DNA]</scope>
    <source>
        <strain>Bristol N2</strain>
    </source>
</reference>
<sequence>MSAKEVDFERESHLHAVMCFLTGQSGEKIVSIYPHRKPATKAPSKDPQPSSSNPGQCVKPVLTSVKDPSYGFGRVDTEFDMSLGMLAYVFKTQEIACNDGFDMKINNQRFVAYPKTWKARGESTNYQISIVFALKNGCEQHTASAYQTLSNKIAVSLVMLQNYFGFLEREDKWADNAEEPNKDHPLEEFAKTSFIVQPLAEMFEEVRNRGNIHKYLINFVELGFCDEAHALTKLNVVPKGRQEIDEIVRKMKPYHGILLLEDVWPTPDANPIVAKLLSHCSPDRSILDMSTASGIPIFEVFMIIRHLLQWTRAILIYPLCNTNIYTSATSPQPLDKMAEKFTAQFGNTIHLAAGLAHFNPPKTLDTFIRKNLPLHEQGVRAKLVVALLRHQMLMQLHQFYYILKPYSIAILPEPKEPCPAEFTKIIEESTLPNDVKGVVADICAEMLETTSYASVKRTLSLFVKVAPMMDGNHHLEEIKYKNNLDRTEIEGVFVSFKLVIATFRRPDFVAE</sequence>
<accession>Q20069</accession>
<organism>
    <name type="scientific">Caenorhabditis elegans</name>
    <dbReference type="NCBI Taxonomy" id="6239"/>
    <lineage>
        <taxon>Eukaryota</taxon>
        <taxon>Metazoa</taxon>
        <taxon>Ecdysozoa</taxon>
        <taxon>Nematoda</taxon>
        <taxon>Chromadorea</taxon>
        <taxon>Rhabditida</taxon>
        <taxon>Rhabditina</taxon>
        <taxon>Rhabditomorpha</taxon>
        <taxon>Rhabditoidea</taxon>
        <taxon>Rhabditidae</taxon>
        <taxon>Peloderinae</taxon>
        <taxon>Caenorhabditis</taxon>
    </lineage>
</organism>
<gene>
    <name type="primary">nprl-3</name>
    <name type="ORF">F35H10.7</name>
</gene>
<proteinExistence type="inferred from homology"/>